<proteinExistence type="inferred from homology"/>
<keyword id="KW-0067">ATP-binding</keyword>
<keyword id="KW-0347">Helicase</keyword>
<keyword id="KW-1043">Host membrane</keyword>
<keyword id="KW-0378">Hydrolase</keyword>
<keyword id="KW-0426">Late protein</keyword>
<keyword id="KW-0472">Membrane</keyword>
<keyword id="KW-0547">Nucleotide-binding</keyword>
<keyword id="KW-0812">Transmembrane</keyword>
<keyword id="KW-1133">Transmembrane helix</keyword>
<keyword id="KW-0946">Virion</keyword>
<feature type="chain" id="PRO_0000373104" description="Putative RNA Helicase B962L">
    <location>
        <begin position="1"/>
        <end position="962"/>
    </location>
</feature>
<feature type="transmembrane region" description="Helical" evidence="2">
    <location>
        <begin position="521"/>
        <end position="541"/>
    </location>
</feature>
<feature type="domain" description="Helicase ATP-binding" evidence="3">
    <location>
        <begin position="43"/>
        <end position="229"/>
    </location>
</feature>
<feature type="domain" description="Helicase C-terminal" evidence="4">
    <location>
        <begin position="253"/>
        <end position="459"/>
    </location>
</feature>
<feature type="short sequence motif" description="DEAH box">
    <location>
        <begin position="167"/>
        <end position="170"/>
    </location>
</feature>
<feature type="binding site" evidence="3">
    <location>
        <begin position="56"/>
        <end position="63"/>
    </location>
    <ligand>
        <name>ATP</name>
        <dbReference type="ChEBI" id="CHEBI:30616"/>
    </ligand>
</feature>
<organism>
    <name type="scientific">African swine fever virus (isolate Tick/South Africa/Pretoriuskop Pr4/1996)</name>
    <name type="common">ASFV</name>
    <dbReference type="NCBI Taxonomy" id="561443"/>
    <lineage>
        <taxon>Viruses</taxon>
        <taxon>Varidnaviria</taxon>
        <taxon>Bamfordvirae</taxon>
        <taxon>Nucleocytoviricota</taxon>
        <taxon>Pokkesviricetes</taxon>
        <taxon>Asfuvirales</taxon>
        <taxon>Asfarviridae</taxon>
        <taxon>Asfivirus</taxon>
        <taxon>African swine fever virus</taxon>
    </lineage>
</organism>
<reference key="1">
    <citation type="submission" date="2003-03" db="EMBL/GenBank/DDBJ databases">
        <title>African swine fever virus genomes.</title>
        <authorList>
            <person name="Kutish G.F."/>
            <person name="Rock D.L."/>
        </authorList>
    </citation>
    <scope>NUCLEOTIDE SEQUENCE [LARGE SCALE GENOMIC DNA]</scope>
</reference>
<name>H962L_ASFP4</name>
<sequence length="962" mass="109582">MGKPTLLEPGHLYNVPAEHKNDVPIHYIITWIKQRLPEFGGAIPTSLADRVLIIKSRTGSGKSTALPVHVFRILRNENTHSFQKYLGRSVICTQPRVLTAVTLAKDIGASTHYPDMILGQTVGYQTKPLTEKPNRGLIYATAGVLLAQLHTMTDDEIASRYAFMIIDEAHERALGIDLMLMYIKSMLERMLQRGSIGALRIPFVILTSATIDTHKYSTYFGIGKENIILVEGRQYGVETHWPLYNTNNYIKTACETALTIHKENIHDRPTEADILIFMPGMAEIRFLSMLLNNANMDLAKEKLPLMLILPIDSEAIAQENEAYLGLKAEIKNLWVKNPLTAKVEKPLRRVIVSTVVAETGLTIETLKYVIDPGWNRSIETYYPEWAGGLITRPAAQSRIEQRKGRVGRVFPGHFYPLYTKHVFEQIPAQQYPEIITEGPGAIFLSIVVETIKKNKEGVFKAEEIDMLDPPPTDALASAIERAIVAGLLTRGEKGLQLTQLGDIASRFSFLSIEEARMCFSGYFWQAAISDIATILAVVSVADKKLTNLLDSKQRNGAMLAEAVLAGIPPFLQNIDNAYTNIHLLLADDLLEGLFIFEGFQHAIVYFINNKVNNVAKHLREWCEKKMLKYSSMVQILARREDILNELAIVGLNPFHQWQNRLASANAETFLKRVCTLKQCMYEAYRLNCFCYDEHRLLYTGRNGIHFSYHDAVIKNPSCIVTPRIMLSPVSKQYMEWRLEPSFVSVLDGFVNVDINFLLPRQEIPNILGGAEDEEEEPPLPIQVFLHKYVKTHFHFSGKSFKELKMKPGQTIKFPETTLINMIPDIPKNVVQTYLEISVCHQYSFKRLIYCETFYTDMDDVQHENSVELIGLPMAAHHLTINDFNKLYHLLKPDGFLMVYDLHQSQEAFWLHSLQDALGHHTIRRDMDFHTIPEWETIFKECGFTPIFSKQPSEHELFIVFKK</sequence>
<accession>P0C9A2</accession>
<dbReference type="EC" id="3.6.4.13"/>
<dbReference type="EMBL" id="AY261363">
    <property type="status" value="NOT_ANNOTATED_CDS"/>
    <property type="molecule type" value="Genomic_DNA"/>
</dbReference>
<dbReference type="SMR" id="P0C9A2"/>
<dbReference type="Proteomes" id="UP000000859">
    <property type="component" value="Segment"/>
</dbReference>
<dbReference type="GO" id="GO:0033644">
    <property type="term" value="C:host cell membrane"/>
    <property type="evidence" value="ECO:0007669"/>
    <property type="project" value="UniProtKB-SubCell"/>
</dbReference>
<dbReference type="GO" id="GO:0016020">
    <property type="term" value="C:membrane"/>
    <property type="evidence" value="ECO:0007669"/>
    <property type="project" value="UniProtKB-KW"/>
</dbReference>
<dbReference type="GO" id="GO:0044423">
    <property type="term" value="C:virion component"/>
    <property type="evidence" value="ECO:0007669"/>
    <property type="project" value="UniProtKB-KW"/>
</dbReference>
<dbReference type="GO" id="GO:0005524">
    <property type="term" value="F:ATP binding"/>
    <property type="evidence" value="ECO:0007669"/>
    <property type="project" value="UniProtKB-KW"/>
</dbReference>
<dbReference type="GO" id="GO:0016887">
    <property type="term" value="F:ATP hydrolysis activity"/>
    <property type="evidence" value="ECO:0007669"/>
    <property type="project" value="RHEA"/>
</dbReference>
<dbReference type="GO" id="GO:0003723">
    <property type="term" value="F:RNA binding"/>
    <property type="evidence" value="ECO:0007669"/>
    <property type="project" value="TreeGrafter"/>
</dbReference>
<dbReference type="GO" id="GO:0003724">
    <property type="term" value="F:RNA helicase activity"/>
    <property type="evidence" value="ECO:0007669"/>
    <property type="project" value="UniProtKB-EC"/>
</dbReference>
<dbReference type="CDD" id="cd17917">
    <property type="entry name" value="DEXHc_RHA-like"/>
    <property type="match status" value="1"/>
</dbReference>
<dbReference type="Gene3D" id="3.40.50.300">
    <property type="entry name" value="P-loop containing nucleotide triphosphate hydrolases"/>
    <property type="match status" value="2"/>
</dbReference>
<dbReference type="Gene3D" id="3.40.50.150">
    <property type="entry name" value="Vaccinia Virus protein VP39"/>
    <property type="match status" value="1"/>
</dbReference>
<dbReference type="InterPro" id="IPR011545">
    <property type="entry name" value="DEAD/DEAH_box_helicase_dom"/>
</dbReference>
<dbReference type="InterPro" id="IPR002464">
    <property type="entry name" value="DNA/RNA_helicase_DEAH_CS"/>
</dbReference>
<dbReference type="InterPro" id="IPR014001">
    <property type="entry name" value="Helicase_ATP-bd"/>
</dbReference>
<dbReference type="InterPro" id="IPR001650">
    <property type="entry name" value="Helicase_C-like"/>
</dbReference>
<dbReference type="InterPro" id="IPR027417">
    <property type="entry name" value="P-loop_NTPase"/>
</dbReference>
<dbReference type="InterPro" id="IPR029063">
    <property type="entry name" value="SAM-dependent_MTases_sf"/>
</dbReference>
<dbReference type="PANTHER" id="PTHR18934">
    <property type="entry name" value="ATP-DEPENDENT RNA HELICASE"/>
    <property type="match status" value="1"/>
</dbReference>
<dbReference type="PANTHER" id="PTHR18934:SF91">
    <property type="entry name" value="PRE-MRNA-SPLICING FACTOR ATP-DEPENDENT RNA HELICASE PRP16"/>
    <property type="match status" value="1"/>
</dbReference>
<dbReference type="Pfam" id="PF00270">
    <property type="entry name" value="DEAD"/>
    <property type="match status" value="1"/>
</dbReference>
<dbReference type="SMART" id="SM00487">
    <property type="entry name" value="DEXDc"/>
    <property type="match status" value="1"/>
</dbReference>
<dbReference type="SMART" id="SM00490">
    <property type="entry name" value="HELICc"/>
    <property type="match status" value="1"/>
</dbReference>
<dbReference type="SUPFAM" id="SSF52540">
    <property type="entry name" value="P-loop containing nucleoside triphosphate hydrolases"/>
    <property type="match status" value="1"/>
</dbReference>
<dbReference type="SUPFAM" id="SSF53335">
    <property type="entry name" value="S-adenosyl-L-methionine-dependent methyltransferases"/>
    <property type="match status" value="1"/>
</dbReference>
<dbReference type="PROSITE" id="PS00690">
    <property type="entry name" value="DEAH_ATP_HELICASE"/>
    <property type="match status" value="1"/>
</dbReference>
<dbReference type="PROSITE" id="PS51192">
    <property type="entry name" value="HELICASE_ATP_BIND_1"/>
    <property type="match status" value="1"/>
</dbReference>
<dbReference type="PROSITE" id="PS51194">
    <property type="entry name" value="HELICASE_CTER"/>
    <property type="match status" value="1"/>
</dbReference>
<protein>
    <recommendedName>
        <fullName>Putative RNA Helicase B962L</fullName>
        <ecNumber>3.6.4.13</ecNumber>
    </recommendedName>
</protein>
<comment type="catalytic activity">
    <reaction>
        <text>ATP + H2O = ADP + phosphate + H(+)</text>
        <dbReference type="Rhea" id="RHEA:13065"/>
        <dbReference type="ChEBI" id="CHEBI:15377"/>
        <dbReference type="ChEBI" id="CHEBI:15378"/>
        <dbReference type="ChEBI" id="CHEBI:30616"/>
        <dbReference type="ChEBI" id="CHEBI:43474"/>
        <dbReference type="ChEBI" id="CHEBI:456216"/>
        <dbReference type="EC" id="3.6.4.13"/>
    </reaction>
</comment>
<comment type="subcellular location">
    <subcellularLocation>
        <location evidence="5">Host membrane</location>
        <topology evidence="5">Single-pass membrane protein</topology>
    </subcellularLocation>
    <subcellularLocation>
        <location evidence="1">Virion</location>
    </subcellularLocation>
</comment>
<comment type="induction">
    <text evidence="5">Expressed in the late phase of the viral replicative cycle.</text>
</comment>
<comment type="similarity">
    <text evidence="5">Belongs to the DEAD box helicase family. DEAH subfamily.</text>
</comment>
<organismHost>
    <name type="scientific">Ornithodoros</name>
    <name type="common">relapsing fever ticks</name>
    <dbReference type="NCBI Taxonomy" id="6937"/>
</organismHost>
<organismHost>
    <name type="scientific">Phacochoerus aethiopicus</name>
    <name type="common">Warthog</name>
    <dbReference type="NCBI Taxonomy" id="85517"/>
</organismHost>
<organismHost>
    <name type="scientific">Phacochoerus africanus</name>
    <name type="common">Warthog</name>
    <dbReference type="NCBI Taxonomy" id="41426"/>
</organismHost>
<organismHost>
    <name type="scientific">Potamochoerus larvatus</name>
    <name type="common">Bushpig</name>
    <dbReference type="NCBI Taxonomy" id="273792"/>
</organismHost>
<organismHost>
    <name type="scientific">Sus scrofa</name>
    <name type="common">Pig</name>
    <dbReference type="NCBI Taxonomy" id="9823"/>
</organismHost>
<gene>
    <name type="ordered locus">Pret-084</name>
</gene>
<evidence type="ECO:0000250" key="1">
    <source>
        <dbReference type="UniProtKB" id="Q89443"/>
    </source>
</evidence>
<evidence type="ECO:0000255" key="2"/>
<evidence type="ECO:0000255" key="3">
    <source>
        <dbReference type="PROSITE-ProRule" id="PRU00541"/>
    </source>
</evidence>
<evidence type="ECO:0000255" key="4">
    <source>
        <dbReference type="PROSITE-ProRule" id="PRU00542"/>
    </source>
</evidence>
<evidence type="ECO:0000305" key="5"/>